<name>RPAC1_DICDI</name>
<comment type="function">
    <text evidence="1 2">DNA-dependent RNA polymerase catalyzes the transcription of DNA into RNA using the four ribonucleoside triphosphates as substrates. Common component of RNA polymerases I and III which synthesize ribosomal RNA precursors and small RNAs, such as 5S rRNA and tRNAs, respectively. RPAC1 is part of the Pol core element with the central large cleft and probably a clamp element that moves to open and close the cleft (By similarity).</text>
</comment>
<comment type="subunit">
    <text evidence="1">Component of the RNA polymerase I (Pol I) and RNA polymerase III (Pol III) complexes consisting of at least 13 and 17 subunits, respectively. Interacts with RPAC19/RPAC2.</text>
</comment>
<comment type="subcellular location">
    <subcellularLocation>
        <location evidence="1">Nucleus</location>
    </subcellularLocation>
</comment>
<comment type="similarity">
    <text evidence="4">Belongs to the archaeal Rpo3/eukaryotic RPB3 RNA polymerase subunit family.</text>
</comment>
<protein>
    <recommendedName>
        <fullName>DNA-directed RNA polymerases I and III subunit rpac1</fullName>
        <shortName>RNA polymerases I and III subunit AC1</shortName>
    </recommendedName>
</protein>
<feature type="chain" id="PRO_0000327994" description="DNA-directed RNA polymerases I and III subunit rpac1">
    <location>
        <begin position="1"/>
        <end position="345"/>
    </location>
</feature>
<feature type="region of interest" description="Disordered" evidence="3">
    <location>
        <begin position="1"/>
        <end position="20"/>
    </location>
</feature>
<feature type="compositionally biased region" description="Polar residues" evidence="3">
    <location>
        <begin position="1"/>
        <end position="11"/>
    </location>
</feature>
<organism>
    <name type="scientific">Dictyostelium discoideum</name>
    <name type="common">Social amoeba</name>
    <dbReference type="NCBI Taxonomy" id="44689"/>
    <lineage>
        <taxon>Eukaryota</taxon>
        <taxon>Amoebozoa</taxon>
        <taxon>Evosea</taxon>
        <taxon>Eumycetozoa</taxon>
        <taxon>Dictyostelia</taxon>
        <taxon>Dictyosteliales</taxon>
        <taxon>Dictyosteliaceae</taxon>
        <taxon>Dictyostelium</taxon>
    </lineage>
</organism>
<reference key="1">
    <citation type="journal article" date="2005" name="Nature">
        <title>The genome of the social amoeba Dictyostelium discoideum.</title>
        <authorList>
            <person name="Eichinger L."/>
            <person name="Pachebat J.A."/>
            <person name="Gloeckner G."/>
            <person name="Rajandream M.A."/>
            <person name="Sucgang R."/>
            <person name="Berriman M."/>
            <person name="Song J."/>
            <person name="Olsen R."/>
            <person name="Szafranski K."/>
            <person name="Xu Q."/>
            <person name="Tunggal B."/>
            <person name="Kummerfeld S."/>
            <person name="Madera M."/>
            <person name="Konfortov B.A."/>
            <person name="Rivero F."/>
            <person name="Bankier A.T."/>
            <person name="Lehmann R."/>
            <person name="Hamlin N."/>
            <person name="Davies R."/>
            <person name="Gaudet P."/>
            <person name="Fey P."/>
            <person name="Pilcher K."/>
            <person name="Chen G."/>
            <person name="Saunders D."/>
            <person name="Sodergren E.J."/>
            <person name="Davis P."/>
            <person name="Kerhornou A."/>
            <person name="Nie X."/>
            <person name="Hall N."/>
            <person name="Anjard C."/>
            <person name="Hemphill L."/>
            <person name="Bason N."/>
            <person name="Farbrother P."/>
            <person name="Desany B."/>
            <person name="Just E."/>
            <person name="Morio T."/>
            <person name="Rost R."/>
            <person name="Churcher C.M."/>
            <person name="Cooper J."/>
            <person name="Haydock S."/>
            <person name="van Driessche N."/>
            <person name="Cronin A."/>
            <person name="Goodhead I."/>
            <person name="Muzny D.M."/>
            <person name="Mourier T."/>
            <person name="Pain A."/>
            <person name="Lu M."/>
            <person name="Harper D."/>
            <person name="Lindsay R."/>
            <person name="Hauser H."/>
            <person name="James K.D."/>
            <person name="Quiles M."/>
            <person name="Madan Babu M."/>
            <person name="Saito T."/>
            <person name="Buchrieser C."/>
            <person name="Wardroper A."/>
            <person name="Felder M."/>
            <person name="Thangavelu M."/>
            <person name="Johnson D."/>
            <person name="Knights A."/>
            <person name="Loulseged H."/>
            <person name="Mungall K.L."/>
            <person name="Oliver K."/>
            <person name="Price C."/>
            <person name="Quail M.A."/>
            <person name="Urushihara H."/>
            <person name="Hernandez J."/>
            <person name="Rabbinowitsch E."/>
            <person name="Steffen D."/>
            <person name="Sanders M."/>
            <person name="Ma J."/>
            <person name="Kohara Y."/>
            <person name="Sharp S."/>
            <person name="Simmonds M.N."/>
            <person name="Spiegler S."/>
            <person name="Tivey A."/>
            <person name="Sugano S."/>
            <person name="White B."/>
            <person name="Walker D."/>
            <person name="Woodward J.R."/>
            <person name="Winckler T."/>
            <person name="Tanaka Y."/>
            <person name="Shaulsky G."/>
            <person name="Schleicher M."/>
            <person name="Weinstock G.M."/>
            <person name="Rosenthal A."/>
            <person name="Cox E.C."/>
            <person name="Chisholm R.L."/>
            <person name="Gibbs R.A."/>
            <person name="Loomis W.F."/>
            <person name="Platzer M."/>
            <person name="Kay R.R."/>
            <person name="Williams J.G."/>
            <person name="Dear P.H."/>
            <person name="Noegel A.A."/>
            <person name="Barrell B.G."/>
            <person name="Kuspa A."/>
        </authorList>
    </citation>
    <scope>NUCLEOTIDE SEQUENCE [LARGE SCALE GENOMIC DNA]</scope>
    <source>
        <strain>AX4</strain>
    </source>
</reference>
<dbReference type="EMBL" id="AAFI02000047">
    <property type="protein sequence ID" value="EAL66291.1"/>
    <property type="molecule type" value="Genomic_DNA"/>
</dbReference>
<dbReference type="RefSeq" id="XP_640267.1">
    <property type="nucleotide sequence ID" value="XM_635175.1"/>
</dbReference>
<dbReference type="SMR" id="Q54SN4"/>
<dbReference type="FunCoup" id="Q54SN4">
    <property type="interactions" value="513"/>
</dbReference>
<dbReference type="STRING" id="44689.Q54SN4"/>
<dbReference type="PaxDb" id="44689-DDB0216288"/>
<dbReference type="EnsemblProtists" id="EAL66291">
    <property type="protein sequence ID" value="EAL66291"/>
    <property type="gene ID" value="DDB_G0282339"/>
</dbReference>
<dbReference type="GeneID" id="8623528"/>
<dbReference type="KEGG" id="ddi:DDB_G0282339"/>
<dbReference type="dictyBase" id="DDB_G0282339">
    <property type="gene designation" value="rpa5"/>
</dbReference>
<dbReference type="VEuPathDB" id="AmoebaDB:DDB_G0282339"/>
<dbReference type="eggNOG" id="KOG1521">
    <property type="taxonomic scope" value="Eukaryota"/>
</dbReference>
<dbReference type="HOGENOM" id="CLU_038421_0_1_1"/>
<dbReference type="InParanoid" id="Q54SN4"/>
<dbReference type="OMA" id="KKKCRAF"/>
<dbReference type="PhylomeDB" id="Q54SN4"/>
<dbReference type="Reactome" id="R-DDI-73762">
    <property type="pathway name" value="RNA Polymerase I Transcription Initiation"/>
</dbReference>
<dbReference type="Reactome" id="R-DDI-73772">
    <property type="pathway name" value="RNA Polymerase I Promoter Escape"/>
</dbReference>
<dbReference type="Reactome" id="R-DDI-76061">
    <property type="pathway name" value="RNA Polymerase III Transcription Initiation From Type 1 Promoter"/>
</dbReference>
<dbReference type="Reactome" id="R-DDI-76066">
    <property type="pathway name" value="RNA Polymerase III Transcription Initiation From Type 2 Promoter"/>
</dbReference>
<dbReference type="PRO" id="PR:Q54SN4"/>
<dbReference type="Proteomes" id="UP000002195">
    <property type="component" value="Chromosome 3"/>
</dbReference>
<dbReference type="GO" id="GO:0005736">
    <property type="term" value="C:RNA polymerase I complex"/>
    <property type="evidence" value="ECO:0000250"/>
    <property type="project" value="dictyBase"/>
</dbReference>
<dbReference type="GO" id="GO:0005666">
    <property type="term" value="C:RNA polymerase III complex"/>
    <property type="evidence" value="ECO:0000250"/>
    <property type="project" value="dictyBase"/>
</dbReference>
<dbReference type="GO" id="GO:0003677">
    <property type="term" value="F:DNA binding"/>
    <property type="evidence" value="ECO:0007669"/>
    <property type="project" value="InterPro"/>
</dbReference>
<dbReference type="GO" id="GO:0003899">
    <property type="term" value="F:DNA-directed RNA polymerase activity"/>
    <property type="evidence" value="ECO:0000250"/>
    <property type="project" value="dictyBase"/>
</dbReference>
<dbReference type="GO" id="GO:0046983">
    <property type="term" value="F:protein dimerization activity"/>
    <property type="evidence" value="ECO:0007669"/>
    <property type="project" value="InterPro"/>
</dbReference>
<dbReference type="GO" id="GO:0006360">
    <property type="term" value="P:transcription by RNA polymerase I"/>
    <property type="evidence" value="ECO:0000250"/>
    <property type="project" value="dictyBase"/>
</dbReference>
<dbReference type="GO" id="GO:0006383">
    <property type="term" value="P:transcription by RNA polymerase III"/>
    <property type="evidence" value="ECO:0000250"/>
    <property type="project" value="dictyBase"/>
</dbReference>
<dbReference type="CDD" id="cd07032">
    <property type="entry name" value="RNAP_I_II_AC40"/>
    <property type="match status" value="1"/>
</dbReference>
<dbReference type="FunFam" id="2.170.120.12:FF:000003">
    <property type="entry name" value="Dna-directed rna polymerases i and iii subunit"/>
    <property type="match status" value="1"/>
</dbReference>
<dbReference type="Gene3D" id="2.170.120.12">
    <property type="entry name" value="DNA-directed RNA polymerase, insert domain"/>
    <property type="match status" value="1"/>
</dbReference>
<dbReference type="Gene3D" id="3.30.1360.10">
    <property type="entry name" value="RNA polymerase, RBP11-like subunit"/>
    <property type="match status" value="1"/>
</dbReference>
<dbReference type="HAMAP" id="MF_00320">
    <property type="entry name" value="RNApol_arch_Rpo3"/>
    <property type="match status" value="1"/>
</dbReference>
<dbReference type="InterPro" id="IPR001514">
    <property type="entry name" value="DNA-dir_RNA_pol_30-40kDasu_CS"/>
</dbReference>
<dbReference type="InterPro" id="IPR011262">
    <property type="entry name" value="DNA-dir_RNA_pol_insert"/>
</dbReference>
<dbReference type="InterPro" id="IPR011263">
    <property type="entry name" value="DNA-dir_RNA_pol_RpoA/D/Rpb3"/>
</dbReference>
<dbReference type="InterPro" id="IPR036603">
    <property type="entry name" value="RBP11-like"/>
</dbReference>
<dbReference type="InterPro" id="IPR022842">
    <property type="entry name" value="RNAP_Rpo3/Rpb3/RPAC1"/>
</dbReference>
<dbReference type="InterPro" id="IPR033901">
    <property type="entry name" value="RNAPI/III_AC40"/>
</dbReference>
<dbReference type="InterPro" id="IPR036643">
    <property type="entry name" value="RNApol_insert_sf"/>
</dbReference>
<dbReference type="InterPro" id="IPR050518">
    <property type="entry name" value="Rpo3/RPB3_RNA_Pol_subunit"/>
</dbReference>
<dbReference type="NCBIfam" id="NF001988">
    <property type="entry name" value="PRK00783.1"/>
    <property type="match status" value="1"/>
</dbReference>
<dbReference type="PANTHER" id="PTHR11800">
    <property type="entry name" value="DNA-DIRECTED RNA POLYMERASE"/>
    <property type="match status" value="1"/>
</dbReference>
<dbReference type="PANTHER" id="PTHR11800:SF13">
    <property type="entry name" value="DNA-DIRECTED RNA POLYMERASES I AND III SUBUNIT RPAC1"/>
    <property type="match status" value="1"/>
</dbReference>
<dbReference type="Pfam" id="PF01000">
    <property type="entry name" value="RNA_pol_A_bac"/>
    <property type="match status" value="1"/>
</dbReference>
<dbReference type="Pfam" id="PF01193">
    <property type="entry name" value="RNA_pol_L"/>
    <property type="match status" value="1"/>
</dbReference>
<dbReference type="SMART" id="SM00662">
    <property type="entry name" value="RPOLD"/>
    <property type="match status" value="1"/>
</dbReference>
<dbReference type="SUPFAM" id="SSF56553">
    <property type="entry name" value="Insert subdomain of RNA polymerase alpha subunit"/>
    <property type="match status" value="1"/>
</dbReference>
<dbReference type="SUPFAM" id="SSF55257">
    <property type="entry name" value="RBP11-like subunits of RNA polymerase"/>
    <property type="match status" value="1"/>
</dbReference>
<dbReference type="PROSITE" id="PS00446">
    <property type="entry name" value="RNA_POL_D_30KD"/>
    <property type="match status" value="1"/>
</dbReference>
<accession>Q54SN4</accession>
<proteinExistence type="inferred from homology"/>
<evidence type="ECO:0000250" key="1">
    <source>
        <dbReference type="UniProtKB" id="O15160"/>
    </source>
</evidence>
<evidence type="ECO:0000250" key="2">
    <source>
        <dbReference type="UniProtKB" id="P07703"/>
    </source>
</evidence>
<evidence type="ECO:0000256" key="3">
    <source>
        <dbReference type="SAM" id="MobiDB-lite"/>
    </source>
</evidence>
<evidence type="ECO:0000305" key="4"/>
<keyword id="KW-0240">DNA-directed RNA polymerase</keyword>
<keyword id="KW-0539">Nucleus</keyword>
<keyword id="KW-1185">Reference proteome</keyword>
<keyword id="KW-0804">Transcription</keyword>
<gene>
    <name type="primary">polr1c</name>
    <name type="synonym">rpa5</name>
    <name type="ORF">DDB_G0282339</name>
</gene>
<sequence length="345" mass="39443">MVNKSTTNGVSDPNLENKRTKVTLTNSGVENARGTYYSGAYTSVGYDNSFNLNRFKENFKINILSESANELVFEMIGIDAPIANALRRIMISEIPTMAIEKVYIINNTSILQDEVLAHRLGMIPIKVDPRKFNFKLPNKEYTAEDTLIFQLKVKCEKDSVTGKIINETALSKHLIWVPTQDQEEMFPNEEDRPRPMEDDIPIMKLRPGQVIDIQCYCEKNIGREHIKWSPVCTASYRLQPVISVDKSIKGDKANQLLEKCPKKVFDIEDSGQVVAARPLDCTMCRECIRDPEFEQNVKIERVRDHFIFSIESTGALKSREIFQEAIKIFIEKCNIVEESINKLVN</sequence>